<accession>Q5PA72</accession>
<comment type="function">
    <text evidence="1">One of the primary rRNA binding proteins, it binds directly to 16S rRNA central domain where it helps coordinate assembly of the platform of the 30S subunit.</text>
</comment>
<comment type="subunit">
    <text evidence="1">Part of the 30S ribosomal subunit. Contacts proteins S5 and S12.</text>
</comment>
<comment type="similarity">
    <text evidence="1">Belongs to the universal ribosomal protein uS8 family.</text>
</comment>
<keyword id="KW-0687">Ribonucleoprotein</keyword>
<keyword id="KW-0689">Ribosomal protein</keyword>
<keyword id="KW-0694">RNA-binding</keyword>
<keyword id="KW-0699">rRNA-binding</keyword>
<feature type="chain" id="PRO_0000126352" description="Small ribosomal subunit protein uS8">
    <location>
        <begin position="1"/>
        <end position="132"/>
    </location>
</feature>
<reference key="1">
    <citation type="journal article" date="2005" name="Proc. Natl. Acad. Sci. U.S.A.">
        <title>Complete genome sequencing of Anaplasma marginale reveals that the surface is skewed to two superfamilies of outer membrane proteins.</title>
        <authorList>
            <person name="Brayton K.A."/>
            <person name="Kappmeyer L.S."/>
            <person name="Herndon D.R."/>
            <person name="Dark M.J."/>
            <person name="Tibbals D.L."/>
            <person name="Palmer G.H."/>
            <person name="McGuire T.C."/>
            <person name="Knowles D.P. Jr."/>
        </authorList>
    </citation>
    <scope>NUCLEOTIDE SEQUENCE [LARGE SCALE GENOMIC DNA]</scope>
    <source>
        <strain>St. Maries</strain>
    </source>
</reference>
<evidence type="ECO:0000255" key="1">
    <source>
        <dbReference type="HAMAP-Rule" id="MF_01302"/>
    </source>
</evidence>
<evidence type="ECO:0000305" key="2"/>
<protein>
    <recommendedName>
        <fullName evidence="1">Small ribosomal subunit protein uS8</fullName>
    </recommendedName>
    <alternativeName>
        <fullName evidence="2">30S ribosomal protein S8</fullName>
    </alternativeName>
</protein>
<dbReference type="EMBL" id="CP000030">
    <property type="protein sequence ID" value="AAV86808.1"/>
    <property type="molecule type" value="Genomic_DNA"/>
</dbReference>
<dbReference type="RefSeq" id="WP_010265262.1">
    <property type="nucleotide sequence ID" value="NZ_AFMU01000034.1"/>
</dbReference>
<dbReference type="SMR" id="Q5PA72"/>
<dbReference type="GeneID" id="7397864"/>
<dbReference type="KEGG" id="ama:AM897"/>
<dbReference type="PATRIC" id="fig|320483.3.peg.775"/>
<dbReference type="HOGENOM" id="CLU_098428_0_0_5"/>
<dbReference type="GO" id="GO:1990904">
    <property type="term" value="C:ribonucleoprotein complex"/>
    <property type="evidence" value="ECO:0007669"/>
    <property type="project" value="UniProtKB-KW"/>
</dbReference>
<dbReference type="GO" id="GO:0005840">
    <property type="term" value="C:ribosome"/>
    <property type="evidence" value="ECO:0007669"/>
    <property type="project" value="UniProtKB-KW"/>
</dbReference>
<dbReference type="GO" id="GO:0019843">
    <property type="term" value="F:rRNA binding"/>
    <property type="evidence" value="ECO:0007669"/>
    <property type="project" value="UniProtKB-UniRule"/>
</dbReference>
<dbReference type="GO" id="GO:0003735">
    <property type="term" value="F:structural constituent of ribosome"/>
    <property type="evidence" value="ECO:0007669"/>
    <property type="project" value="InterPro"/>
</dbReference>
<dbReference type="GO" id="GO:0006412">
    <property type="term" value="P:translation"/>
    <property type="evidence" value="ECO:0007669"/>
    <property type="project" value="UniProtKB-UniRule"/>
</dbReference>
<dbReference type="FunFam" id="3.30.1490.10:FF:000001">
    <property type="entry name" value="30S ribosomal protein S8"/>
    <property type="match status" value="1"/>
</dbReference>
<dbReference type="Gene3D" id="3.30.1370.30">
    <property type="match status" value="1"/>
</dbReference>
<dbReference type="Gene3D" id="3.30.1490.10">
    <property type="match status" value="1"/>
</dbReference>
<dbReference type="HAMAP" id="MF_01302_B">
    <property type="entry name" value="Ribosomal_uS8_B"/>
    <property type="match status" value="1"/>
</dbReference>
<dbReference type="InterPro" id="IPR000630">
    <property type="entry name" value="Ribosomal_uS8"/>
</dbReference>
<dbReference type="InterPro" id="IPR047863">
    <property type="entry name" value="Ribosomal_uS8_CS"/>
</dbReference>
<dbReference type="InterPro" id="IPR035987">
    <property type="entry name" value="Ribosomal_uS8_sf"/>
</dbReference>
<dbReference type="NCBIfam" id="NF001109">
    <property type="entry name" value="PRK00136.1"/>
    <property type="match status" value="1"/>
</dbReference>
<dbReference type="PANTHER" id="PTHR11758">
    <property type="entry name" value="40S RIBOSOMAL PROTEIN S15A"/>
    <property type="match status" value="1"/>
</dbReference>
<dbReference type="Pfam" id="PF00410">
    <property type="entry name" value="Ribosomal_S8"/>
    <property type="match status" value="1"/>
</dbReference>
<dbReference type="SUPFAM" id="SSF56047">
    <property type="entry name" value="Ribosomal protein S8"/>
    <property type="match status" value="1"/>
</dbReference>
<dbReference type="PROSITE" id="PS00053">
    <property type="entry name" value="RIBOSOMAL_S8"/>
    <property type="match status" value="1"/>
</dbReference>
<gene>
    <name evidence="1" type="primary">rpsH</name>
    <name type="ordered locus">AM897</name>
</gene>
<proteinExistence type="inferred from homology"/>
<sequence length="132" mass="14641">MSLSDPIADFLTRLRNGQAGMNKVVFVPHSKVVRSILDILLAEGYIEGFTEESKSSGIKYLKVCLKYYNCAPVIKKIVRVSRPGKRVYSSADRLPKFYNGLGVYIVSTSQGVMLDYRARKLGIGGEILCGVF</sequence>
<name>RS8_ANAMM</name>
<organism>
    <name type="scientific">Anaplasma marginale (strain St. Maries)</name>
    <dbReference type="NCBI Taxonomy" id="234826"/>
    <lineage>
        <taxon>Bacteria</taxon>
        <taxon>Pseudomonadati</taxon>
        <taxon>Pseudomonadota</taxon>
        <taxon>Alphaproteobacteria</taxon>
        <taxon>Rickettsiales</taxon>
        <taxon>Anaplasmataceae</taxon>
        <taxon>Anaplasma</taxon>
    </lineage>
</organism>